<reference evidence="6" key="1">
    <citation type="submission" date="2005-07" db="EMBL/GenBank/DDBJ databases">
        <title>A toxin of Triatoma infestans salivary glands.</title>
        <authorList>
            <person name="Feijo G.C.S."/>
            <person name="Teixeira A.R.L.C."/>
        </authorList>
    </citation>
    <scope>NUCLEOTIDE SEQUENCE [MRNA]</scope>
</reference>
<reference evidence="7" key="2">
    <citation type="journal article" date="2008" name="Insect Biochem. Mol. Biol.">
        <title>An insight into the sialome of the blood-sucking bug Triatoma infestans, a vector of Chagas' disease.</title>
        <authorList>
            <person name="Assumpcao T.C.F."/>
            <person name="Francischetti I.M.B."/>
            <person name="Andersen J.F."/>
            <person name="Schwarz A."/>
            <person name="Santana J.M."/>
            <person name="Ribeiro J.M.C."/>
        </authorList>
    </citation>
    <scope>NUCLEOTIDE SEQUENCE [MRNA]</scope>
    <scope>CHARACTERIZATION</scope>
    <scope>POSSIBLE FUNCTION</scope>
    <source>
        <tissue>Salivary gland</tissue>
    </source>
</reference>
<name>CUBT_TRIIF</name>
<accession>Q45KX2</accession>
<evidence type="ECO:0000250" key="1">
    <source>
        <dbReference type="UniProtKB" id="A0A6B9L3R4"/>
    </source>
</evidence>
<evidence type="ECO:0000255" key="2"/>
<evidence type="ECO:0000255" key="3">
    <source>
        <dbReference type="PROSITE-ProRule" id="PRU00059"/>
    </source>
</evidence>
<evidence type="ECO:0000305" key="4"/>
<evidence type="ECO:0000305" key="5">
    <source>
    </source>
</evidence>
<evidence type="ECO:0000312" key="6">
    <source>
        <dbReference type="EMBL" id="AAZ38957.1"/>
    </source>
</evidence>
<evidence type="ECO:0000312" key="7">
    <source>
        <dbReference type="EMBL" id="ABR27914.1"/>
    </source>
</evidence>
<organism>
    <name type="scientific">Triatoma infestans</name>
    <name type="common">Assassin bug</name>
    <dbReference type="NCBI Taxonomy" id="30076"/>
    <lineage>
        <taxon>Eukaryota</taxon>
        <taxon>Metazoa</taxon>
        <taxon>Ecdysozoa</taxon>
        <taxon>Arthropoda</taxon>
        <taxon>Hexapoda</taxon>
        <taxon>Insecta</taxon>
        <taxon>Pterygota</taxon>
        <taxon>Neoptera</taxon>
        <taxon>Paraneoptera</taxon>
        <taxon>Hemiptera</taxon>
        <taxon>Heteroptera</taxon>
        <taxon>Panheteroptera</taxon>
        <taxon>Cimicomorpha</taxon>
        <taxon>Reduviidae</taxon>
        <taxon>Triatominae</taxon>
        <taxon>Triatoma</taxon>
    </lineage>
</organism>
<protein>
    <recommendedName>
        <fullName evidence="6">Triatox</fullName>
    </recommendedName>
    <alternativeName>
        <fullName evidence="1">Venom CUB domain-containing protein 1</fullName>
    </alternativeName>
</protein>
<proteinExistence type="evidence at protein level"/>
<comment type="function">
    <text evidence="5">May function as an antimicrobial peptide and may be related to the innate defense of the insect in the salivary glands.</text>
</comment>
<comment type="subcellular location">
    <subcellularLocation>
        <location evidence="5">Secreted</location>
    </subcellularLocation>
</comment>
<comment type="tissue specificity">
    <text evidence="5">Expressed by the venom gland.</text>
</comment>
<comment type="miscellaneous">
    <text evidence="5">Predicted to be an amphipathic alpha-helix.</text>
</comment>
<comment type="similarity">
    <text evidence="4">Belongs to the venom CUB family.</text>
</comment>
<comment type="sequence caution" evidence="4">
    <conflict type="erroneous initiation">
        <sequence resource="EMBL-CDS" id="AAZ38957"/>
    </conflict>
    <text>Extended N-terminus.</text>
</comment>
<comment type="sequence caution" evidence="4">
    <conflict type="erroneous initiation">
        <sequence resource="EMBL-CDS" id="ABR27914"/>
    </conflict>
    <text>Extended N-terminus.</text>
</comment>
<sequence>MTTLRVLLAVCCAAYCILAEDVTVPANGELKLMPDQKAGGRLEGQWKISTPDHYYLIVSCGLWSSASGTCKDKILITQGGKTTEVCGEGKNSFYVQQDTNLNTAEIIILTNTPDARAMCTVYSAEKPKEENTF</sequence>
<feature type="signal peptide" evidence="2">
    <location>
        <begin position="1"/>
        <end position="22"/>
    </location>
</feature>
<feature type="chain" id="PRO_5010138385" description="Triatox">
    <location>
        <begin position="23"/>
        <end position="133"/>
    </location>
</feature>
<feature type="domain" description="CUB" evidence="3">
    <location>
        <begin position="23"/>
        <end position="125"/>
    </location>
</feature>
<feature type="disulfide bond" evidence="3">
    <location>
        <begin position="70"/>
        <end position="86"/>
    </location>
</feature>
<dbReference type="EMBL" id="DQ126071">
    <property type="protein sequence ID" value="AAZ38957.1"/>
    <property type="status" value="ALT_INIT"/>
    <property type="molecule type" value="mRNA"/>
</dbReference>
<dbReference type="EMBL" id="EF639029">
    <property type="protein sequence ID" value="ABR27914.1"/>
    <property type="status" value="ALT_INIT"/>
    <property type="molecule type" value="mRNA"/>
</dbReference>
<dbReference type="GO" id="GO:0005576">
    <property type="term" value="C:extracellular region"/>
    <property type="evidence" value="ECO:0007669"/>
    <property type="project" value="UniProtKB-SubCell"/>
</dbReference>
<dbReference type="GO" id="GO:0045087">
    <property type="term" value="P:innate immune response"/>
    <property type="evidence" value="ECO:0007669"/>
    <property type="project" value="UniProtKB-KW"/>
</dbReference>
<keyword id="KW-0929">Antimicrobial</keyword>
<keyword id="KW-1015">Disulfide bond</keyword>
<keyword id="KW-0391">Immunity</keyword>
<keyword id="KW-0399">Innate immunity</keyword>
<keyword id="KW-0964">Secreted</keyword>
<keyword id="KW-0732">Signal</keyword>